<protein>
    <recommendedName>
        <fullName>Uncharacterized protein MJ1373</fullName>
    </recommendedName>
</protein>
<reference key="1">
    <citation type="journal article" date="1996" name="Science">
        <title>Complete genome sequence of the methanogenic archaeon, Methanococcus jannaschii.</title>
        <authorList>
            <person name="Bult C.J."/>
            <person name="White O."/>
            <person name="Olsen G.J."/>
            <person name="Zhou L."/>
            <person name="Fleischmann R.D."/>
            <person name="Sutton G.G."/>
            <person name="Blake J.A."/>
            <person name="FitzGerald L.M."/>
            <person name="Clayton R.A."/>
            <person name="Gocayne J.D."/>
            <person name="Kerlavage A.R."/>
            <person name="Dougherty B.A."/>
            <person name="Tomb J.-F."/>
            <person name="Adams M.D."/>
            <person name="Reich C.I."/>
            <person name="Overbeek R."/>
            <person name="Kirkness E.F."/>
            <person name="Weinstock K.G."/>
            <person name="Merrick J.M."/>
            <person name="Glodek A."/>
            <person name="Scott J.L."/>
            <person name="Geoghagen N.S.M."/>
            <person name="Weidman J.F."/>
            <person name="Fuhrmann J.L."/>
            <person name="Nguyen D."/>
            <person name="Utterback T.R."/>
            <person name="Kelley J.M."/>
            <person name="Peterson J.D."/>
            <person name="Sadow P.W."/>
            <person name="Hanna M.C."/>
            <person name="Cotton M.D."/>
            <person name="Roberts K.M."/>
            <person name="Hurst M.A."/>
            <person name="Kaine B.P."/>
            <person name="Borodovsky M."/>
            <person name="Klenk H.-P."/>
            <person name="Fraser C.M."/>
            <person name="Smith H.O."/>
            <person name="Woese C.R."/>
            <person name="Venter J.C."/>
        </authorList>
    </citation>
    <scope>NUCLEOTIDE SEQUENCE [LARGE SCALE GENOMIC DNA]</scope>
    <source>
        <strain>ATCC 43067 / DSM 2661 / JAL-1 / JCM 10045 / NBRC 100440</strain>
    </source>
</reference>
<organism>
    <name type="scientific">Methanocaldococcus jannaschii (strain ATCC 43067 / DSM 2661 / JAL-1 / JCM 10045 / NBRC 100440)</name>
    <name type="common">Methanococcus jannaschii</name>
    <dbReference type="NCBI Taxonomy" id="243232"/>
    <lineage>
        <taxon>Archaea</taxon>
        <taxon>Methanobacteriati</taxon>
        <taxon>Methanobacteriota</taxon>
        <taxon>Methanomada group</taxon>
        <taxon>Methanococci</taxon>
        <taxon>Methanococcales</taxon>
        <taxon>Methanocaldococcaceae</taxon>
        <taxon>Methanocaldococcus</taxon>
    </lineage>
</organism>
<name>Y1373_METJA</name>
<gene>
    <name type="ordered locus">MJ1373</name>
</gene>
<sequence>MKKKIIILFLFTAILCSITLCGCISFEKTQIGNYNIKNNSCINSNVSKNQTIQNVSDKIVNNNTNILNTLNYEIIAYGAFGEKNRGYYYYYKDNKTIIVINLEEMPTAGYKIKIINITETANKITVYYKVIPPKEFAAMVVTYPYIKLSVNGTYNVECKEVR</sequence>
<feature type="chain" id="PRO_0000107302" description="Uncharacterized protein MJ1373">
    <location>
        <begin position="1"/>
        <end position="162"/>
    </location>
</feature>
<feature type="transmembrane region" description="Helical" evidence="1">
    <location>
        <begin position="5"/>
        <end position="25"/>
    </location>
</feature>
<evidence type="ECO:0000255" key="1"/>
<evidence type="ECO:0000305" key="2"/>
<comment type="subcellular location">
    <subcellularLocation>
        <location evidence="2">Membrane</location>
        <topology evidence="2">Single-pass membrane protein</topology>
    </subcellularLocation>
</comment>
<dbReference type="EMBL" id="L77117">
    <property type="protein sequence ID" value="AAB99388.1"/>
    <property type="molecule type" value="Genomic_DNA"/>
</dbReference>
<dbReference type="PIR" id="D64471">
    <property type="entry name" value="D64471"/>
</dbReference>
<dbReference type="RefSeq" id="WP_010870890.1">
    <property type="nucleotide sequence ID" value="NC_000909.1"/>
</dbReference>
<dbReference type="STRING" id="243232.MJ_1373"/>
<dbReference type="PaxDb" id="243232-MJ_1373"/>
<dbReference type="EnsemblBacteria" id="AAB99388">
    <property type="protein sequence ID" value="AAB99388"/>
    <property type="gene ID" value="MJ_1373"/>
</dbReference>
<dbReference type="GeneID" id="1452276"/>
<dbReference type="KEGG" id="mja:MJ_1373"/>
<dbReference type="eggNOG" id="arCOG05081">
    <property type="taxonomic scope" value="Archaea"/>
</dbReference>
<dbReference type="HOGENOM" id="CLU_138329_0_0_2"/>
<dbReference type="InParanoid" id="Q58768"/>
<dbReference type="OrthoDB" id="60652at2157"/>
<dbReference type="Proteomes" id="UP000000805">
    <property type="component" value="Chromosome"/>
</dbReference>
<dbReference type="GO" id="GO:0016020">
    <property type="term" value="C:membrane"/>
    <property type="evidence" value="ECO:0007669"/>
    <property type="project" value="UniProtKB-SubCell"/>
</dbReference>
<dbReference type="InterPro" id="IPR025748">
    <property type="entry name" value="PrcB_C_dom"/>
</dbReference>
<dbReference type="Pfam" id="PF14343">
    <property type="entry name" value="PrcB_C"/>
    <property type="match status" value="1"/>
</dbReference>
<dbReference type="PROSITE" id="PS51257">
    <property type="entry name" value="PROKAR_LIPOPROTEIN"/>
    <property type="match status" value="1"/>
</dbReference>
<accession>Q58768</accession>
<keyword id="KW-0472">Membrane</keyword>
<keyword id="KW-1185">Reference proteome</keyword>
<keyword id="KW-0812">Transmembrane</keyword>
<keyword id="KW-1133">Transmembrane helix</keyword>
<proteinExistence type="predicted"/>